<organism>
    <name type="scientific">Streptococcus pneumoniae serotype 2 (strain D39 / NCTC 7466)</name>
    <dbReference type="NCBI Taxonomy" id="373153"/>
    <lineage>
        <taxon>Bacteria</taxon>
        <taxon>Bacillati</taxon>
        <taxon>Bacillota</taxon>
        <taxon>Bacilli</taxon>
        <taxon>Lactobacillales</taxon>
        <taxon>Streptococcaceae</taxon>
        <taxon>Streptococcus</taxon>
    </lineage>
</organism>
<evidence type="ECO:0000255" key="1">
    <source>
        <dbReference type="HAMAP-Rule" id="MF_01818"/>
    </source>
</evidence>
<proteinExistence type="inferred from homology"/>
<comment type="function">
    <text evidence="1">Zinc phosphodiesterase, which displays some tRNA 3'-processing endonuclease activity. Probably involved in tRNA maturation, by removing a 3'-trailer from precursor tRNA.</text>
</comment>
<comment type="catalytic activity">
    <reaction evidence="1">
        <text>Endonucleolytic cleavage of RNA, removing extra 3' nucleotides from tRNA precursor, generating 3' termini of tRNAs. A 3'-hydroxy group is left at the tRNA terminus and a 5'-phosphoryl group is left at the trailer molecule.</text>
        <dbReference type="EC" id="3.1.26.11"/>
    </reaction>
</comment>
<comment type="cofactor">
    <cofactor evidence="1">
        <name>Zn(2+)</name>
        <dbReference type="ChEBI" id="CHEBI:29105"/>
    </cofactor>
    <text evidence="1">Binds 2 Zn(2+) ions.</text>
</comment>
<comment type="subunit">
    <text evidence="1">Homodimer.</text>
</comment>
<comment type="similarity">
    <text evidence="1">Belongs to the RNase Z family.</text>
</comment>
<name>RNZ_STRP2</name>
<accession>Q04LL3</accession>
<feature type="chain" id="PRO_1000070334" description="Ribonuclease Z">
    <location>
        <begin position="1"/>
        <end position="309"/>
    </location>
</feature>
<feature type="active site" description="Proton acceptor" evidence="1">
    <location>
        <position position="67"/>
    </location>
</feature>
<feature type="binding site" evidence="1">
    <location>
        <position position="63"/>
    </location>
    <ligand>
        <name>Zn(2+)</name>
        <dbReference type="ChEBI" id="CHEBI:29105"/>
        <label>1</label>
        <note>catalytic</note>
    </ligand>
</feature>
<feature type="binding site" evidence="1">
    <location>
        <position position="65"/>
    </location>
    <ligand>
        <name>Zn(2+)</name>
        <dbReference type="ChEBI" id="CHEBI:29105"/>
        <label>1</label>
        <note>catalytic</note>
    </ligand>
</feature>
<feature type="binding site" evidence="1">
    <location>
        <position position="67"/>
    </location>
    <ligand>
        <name>Zn(2+)</name>
        <dbReference type="ChEBI" id="CHEBI:29105"/>
        <label>2</label>
        <note>catalytic</note>
    </ligand>
</feature>
<feature type="binding site" evidence="1">
    <location>
        <position position="68"/>
    </location>
    <ligand>
        <name>Zn(2+)</name>
        <dbReference type="ChEBI" id="CHEBI:29105"/>
        <label>2</label>
        <note>catalytic</note>
    </ligand>
</feature>
<feature type="binding site" evidence="1">
    <location>
        <position position="145"/>
    </location>
    <ligand>
        <name>Zn(2+)</name>
        <dbReference type="ChEBI" id="CHEBI:29105"/>
        <label>1</label>
        <note>catalytic</note>
    </ligand>
</feature>
<feature type="binding site" evidence="1">
    <location>
        <position position="216"/>
    </location>
    <ligand>
        <name>Zn(2+)</name>
        <dbReference type="ChEBI" id="CHEBI:29105"/>
        <label>1</label>
        <note>catalytic</note>
    </ligand>
</feature>
<feature type="binding site" evidence="1">
    <location>
        <position position="216"/>
    </location>
    <ligand>
        <name>Zn(2+)</name>
        <dbReference type="ChEBI" id="CHEBI:29105"/>
        <label>2</label>
        <note>catalytic</note>
    </ligand>
</feature>
<feature type="binding site" evidence="1">
    <location>
        <position position="274"/>
    </location>
    <ligand>
        <name>Zn(2+)</name>
        <dbReference type="ChEBI" id="CHEBI:29105"/>
        <label>2</label>
        <note>catalytic</note>
    </ligand>
</feature>
<sequence>MDIQFLGTGAGQPSKARNVSSLALKLLDEINEVWLFDCGEGTQNRILETTIRPRKVSKIFITHLHGDHIFGLPGFLSSRAFQANEEQTDLEIYGPQGIKSFVLTSLRVSGSRLPYRIHFHEFDQDSLGKILETDKFTVYAEELDHTIFCVGYRVMQKDLEGTLDAEKLKAAGVPFGPLFGKIKNGQDLVLEDGTEIKAADYISAPRPGKIITILGDTRKTGASVRLAVNADVLVHESTYGKGDEKIARNHGHSTNMQAAQVAVEAGAKRLLLNHISARFLSKDISKLKKDAATIFENVHVVKDLEEVEI</sequence>
<dbReference type="EC" id="3.1.26.11" evidence="1"/>
<dbReference type="EMBL" id="CP000410">
    <property type="protein sequence ID" value="ABJ54995.1"/>
    <property type="molecule type" value="Genomic_DNA"/>
</dbReference>
<dbReference type="RefSeq" id="WP_000354338.1">
    <property type="nucleotide sequence ID" value="NZ_JAMLJR010000001.1"/>
</dbReference>
<dbReference type="SMR" id="Q04LL3"/>
<dbReference type="PaxDb" id="373153-SPD_0586"/>
<dbReference type="KEGG" id="spd:SPD_0586"/>
<dbReference type="eggNOG" id="COG1234">
    <property type="taxonomic scope" value="Bacteria"/>
</dbReference>
<dbReference type="HOGENOM" id="CLU_031317_2_0_9"/>
<dbReference type="BioCyc" id="SPNE373153:G1G6V-651-MONOMER"/>
<dbReference type="Proteomes" id="UP000001452">
    <property type="component" value="Chromosome"/>
</dbReference>
<dbReference type="GO" id="GO:0042781">
    <property type="term" value="F:3'-tRNA processing endoribonuclease activity"/>
    <property type="evidence" value="ECO:0007669"/>
    <property type="project" value="UniProtKB-UniRule"/>
</dbReference>
<dbReference type="GO" id="GO:0008270">
    <property type="term" value="F:zinc ion binding"/>
    <property type="evidence" value="ECO:0007669"/>
    <property type="project" value="UniProtKB-UniRule"/>
</dbReference>
<dbReference type="CDD" id="cd07717">
    <property type="entry name" value="RNaseZ_ZiPD-like_MBL-fold"/>
    <property type="match status" value="1"/>
</dbReference>
<dbReference type="FunFam" id="3.60.15.10:FF:000002">
    <property type="entry name" value="Ribonuclease Z"/>
    <property type="match status" value="1"/>
</dbReference>
<dbReference type="Gene3D" id="3.60.15.10">
    <property type="entry name" value="Ribonuclease Z/Hydroxyacylglutathione hydrolase-like"/>
    <property type="match status" value="1"/>
</dbReference>
<dbReference type="HAMAP" id="MF_01818">
    <property type="entry name" value="RNase_Z_BN"/>
    <property type="match status" value="1"/>
</dbReference>
<dbReference type="InterPro" id="IPR001279">
    <property type="entry name" value="Metallo-B-lactamas"/>
</dbReference>
<dbReference type="InterPro" id="IPR036866">
    <property type="entry name" value="RibonucZ/Hydroxyglut_hydro"/>
</dbReference>
<dbReference type="InterPro" id="IPR013471">
    <property type="entry name" value="RNase_Z/BN"/>
</dbReference>
<dbReference type="NCBIfam" id="NF000801">
    <property type="entry name" value="PRK00055.1-3"/>
    <property type="match status" value="1"/>
</dbReference>
<dbReference type="NCBIfam" id="TIGR02651">
    <property type="entry name" value="RNase_Z"/>
    <property type="match status" value="1"/>
</dbReference>
<dbReference type="PANTHER" id="PTHR46018">
    <property type="entry name" value="ZINC PHOSPHODIESTERASE ELAC PROTEIN 1"/>
    <property type="match status" value="1"/>
</dbReference>
<dbReference type="PANTHER" id="PTHR46018:SF2">
    <property type="entry name" value="ZINC PHOSPHODIESTERASE ELAC PROTEIN 1"/>
    <property type="match status" value="1"/>
</dbReference>
<dbReference type="Pfam" id="PF00753">
    <property type="entry name" value="Lactamase_B"/>
    <property type="match status" value="1"/>
</dbReference>
<dbReference type="SUPFAM" id="SSF56281">
    <property type="entry name" value="Metallo-hydrolase/oxidoreductase"/>
    <property type="match status" value="1"/>
</dbReference>
<reference key="1">
    <citation type="journal article" date="2007" name="J. Bacteriol.">
        <title>Genome sequence of Avery's virulent serotype 2 strain D39 of Streptococcus pneumoniae and comparison with that of unencapsulated laboratory strain R6.</title>
        <authorList>
            <person name="Lanie J.A."/>
            <person name="Ng W.-L."/>
            <person name="Kazmierczak K.M."/>
            <person name="Andrzejewski T.M."/>
            <person name="Davidsen T.M."/>
            <person name="Wayne K.J."/>
            <person name="Tettelin H."/>
            <person name="Glass J.I."/>
            <person name="Winkler M.E."/>
        </authorList>
    </citation>
    <scope>NUCLEOTIDE SEQUENCE [LARGE SCALE GENOMIC DNA]</scope>
    <source>
        <strain>D39 / NCTC 7466</strain>
    </source>
</reference>
<gene>
    <name evidence="1" type="primary">rnz</name>
    <name type="ordered locus">SPD_0586</name>
</gene>
<keyword id="KW-0255">Endonuclease</keyword>
<keyword id="KW-0378">Hydrolase</keyword>
<keyword id="KW-0479">Metal-binding</keyword>
<keyword id="KW-0540">Nuclease</keyword>
<keyword id="KW-1185">Reference proteome</keyword>
<keyword id="KW-0819">tRNA processing</keyword>
<keyword id="KW-0862">Zinc</keyword>
<protein>
    <recommendedName>
        <fullName evidence="1">Ribonuclease Z</fullName>
        <shortName evidence="1">RNase Z</shortName>
        <ecNumber evidence="1">3.1.26.11</ecNumber>
    </recommendedName>
    <alternativeName>
        <fullName evidence="1">tRNA 3 endonuclease</fullName>
    </alternativeName>
    <alternativeName>
        <fullName evidence="1">tRNase Z</fullName>
    </alternativeName>
</protein>